<accession>Q9A1W2</accession>
<accession>Q491P3</accession>
<gene>
    <name evidence="1" type="primary">rplE</name>
    <name type="ordered locus">SPy_0063</name>
    <name type="ordered locus">M5005_Spy0056</name>
</gene>
<reference key="1">
    <citation type="journal article" date="2001" name="Proc. Natl. Acad. Sci. U.S.A.">
        <title>Complete genome sequence of an M1 strain of Streptococcus pyogenes.</title>
        <authorList>
            <person name="Ferretti J.J."/>
            <person name="McShan W.M."/>
            <person name="Ajdic D.J."/>
            <person name="Savic D.J."/>
            <person name="Savic G."/>
            <person name="Lyon K."/>
            <person name="Primeaux C."/>
            <person name="Sezate S."/>
            <person name="Suvorov A.N."/>
            <person name="Kenton S."/>
            <person name="Lai H.S."/>
            <person name="Lin S.P."/>
            <person name="Qian Y."/>
            <person name="Jia H.G."/>
            <person name="Najar F.Z."/>
            <person name="Ren Q."/>
            <person name="Zhu H."/>
            <person name="Song L."/>
            <person name="White J."/>
            <person name="Yuan X."/>
            <person name="Clifton S.W."/>
            <person name="Roe B.A."/>
            <person name="McLaughlin R.E."/>
        </authorList>
    </citation>
    <scope>NUCLEOTIDE SEQUENCE [LARGE SCALE GENOMIC DNA]</scope>
    <source>
        <strain>ATCC 700294 / SF370 / Serotype M1</strain>
    </source>
</reference>
<reference key="2">
    <citation type="journal article" date="2005" name="J. Infect. Dis.">
        <title>Evolutionary origin and emergence of a highly successful clone of serotype M1 group A Streptococcus involved multiple horizontal gene transfer events.</title>
        <authorList>
            <person name="Sumby P."/>
            <person name="Porcella S.F."/>
            <person name="Madrigal A.G."/>
            <person name="Barbian K.D."/>
            <person name="Virtaneva K."/>
            <person name="Ricklefs S.M."/>
            <person name="Sturdevant D.E."/>
            <person name="Graham M.R."/>
            <person name="Vuopio-Varkila J."/>
            <person name="Hoe N.P."/>
            <person name="Musser J.M."/>
        </authorList>
    </citation>
    <scope>NUCLEOTIDE SEQUENCE [LARGE SCALE GENOMIC DNA]</scope>
    <source>
        <strain>ATCC BAA-947 / MGAS5005 / Serotype M1</strain>
    </source>
</reference>
<sequence length="180" mass="19815">MANRLKEKYTNEVIPALTEKFNYTSVMAVPKVEKIVLNMGVGDAVSNAKNLEKAAAELALISGQKPLITKAKKSIAGFRLREGVAIGAKVTLRGERMYEFLDKLVSVSLPRVRDFHGVPTKSFDGRGNYTLGVKEQLIFPEISFDDVDKVRGLDIVIVTTANTDEESRELLKGLGMPFAK</sequence>
<proteinExistence type="inferred from homology"/>
<organism>
    <name type="scientific">Streptococcus pyogenes serotype M1</name>
    <dbReference type="NCBI Taxonomy" id="301447"/>
    <lineage>
        <taxon>Bacteria</taxon>
        <taxon>Bacillati</taxon>
        <taxon>Bacillota</taxon>
        <taxon>Bacilli</taxon>
        <taxon>Lactobacillales</taxon>
        <taxon>Streptococcaceae</taxon>
        <taxon>Streptococcus</taxon>
    </lineage>
</organism>
<comment type="function">
    <text evidence="1">This is one of the proteins that bind and probably mediate the attachment of the 5S RNA into the large ribosomal subunit, where it forms part of the central protuberance. In the 70S ribosome it contacts protein S13 of the 30S subunit (bridge B1b), connecting the 2 subunits; this bridge is implicated in subunit movement. Contacts the P site tRNA; the 5S rRNA and some of its associated proteins might help stabilize positioning of ribosome-bound tRNAs.</text>
</comment>
<comment type="subunit">
    <text evidence="1">Part of the 50S ribosomal subunit; part of the 5S rRNA/L5/L18/L25 subcomplex. Contacts the 5S rRNA and the P site tRNA. Forms a bridge to the 30S subunit in the 70S ribosome.</text>
</comment>
<comment type="similarity">
    <text evidence="1">Belongs to the universal ribosomal protein uL5 family.</text>
</comment>
<name>RL5_STRP1</name>
<protein>
    <recommendedName>
        <fullName evidence="1">Large ribosomal subunit protein uL5</fullName>
    </recommendedName>
    <alternativeName>
        <fullName evidence="2">50S ribosomal protein L5</fullName>
    </alternativeName>
</protein>
<dbReference type="EMBL" id="AE004092">
    <property type="protein sequence ID" value="AAK33194.1"/>
    <property type="molecule type" value="Genomic_DNA"/>
</dbReference>
<dbReference type="EMBL" id="CP000017">
    <property type="protein sequence ID" value="AAZ50675.1"/>
    <property type="molecule type" value="Genomic_DNA"/>
</dbReference>
<dbReference type="RefSeq" id="NP_268472.1">
    <property type="nucleotide sequence ID" value="NC_002737.2"/>
</dbReference>
<dbReference type="SMR" id="Q9A1W2"/>
<dbReference type="PaxDb" id="1314-HKU360_00089"/>
<dbReference type="KEGG" id="spy:SPy_0063"/>
<dbReference type="KEGG" id="spz:M5005_Spy0056"/>
<dbReference type="PATRIC" id="fig|160490.10.peg.56"/>
<dbReference type="HOGENOM" id="CLU_061015_2_1_9"/>
<dbReference type="OMA" id="PIGCAVT"/>
<dbReference type="PRO" id="PR:Q9A1W2"/>
<dbReference type="Proteomes" id="UP000000750">
    <property type="component" value="Chromosome"/>
</dbReference>
<dbReference type="GO" id="GO:1990904">
    <property type="term" value="C:ribonucleoprotein complex"/>
    <property type="evidence" value="ECO:0007669"/>
    <property type="project" value="UniProtKB-KW"/>
</dbReference>
<dbReference type="GO" id="GO:0005840">
    <property type="term" value="C:ribosome"/>
    <property type="evidence" value="ECO:0007669"/>
    <property type="project" value="UniProtKB-KW"/>
</dbReference>
<dbReference type="GO" id="GO:0019843">
    <property type="term" value="F:rRNA binding"/>
    <property type="evidence" value="ECO:0007669"/>
    <property type="project" value="UniProtKB-UniRule"/>
</dbReference>
<dbReference type="GO" id="GO:0003735">
    <property type="term" value="F:structural constituent of ribosome"/>
    <property type="evidence" value="ECO:0007669"/>
    <property type="project" value="InterPro"/>
</dbReference>
<dbReference type="GO" id="GO:0000049">
    <property type="term" value="F:tRNA binding"/>
    <property type="evidence" value="ECO:0007669"/>
    <property type="project" value="UniProtKB-UniRule"/>
</dbReference>
<dbReference type="GO" id="GO:0006412">
    <property type="term" value="P:translation"/>
    <property type="evidence" value="ECO:0007669"/>
    <property type="project" value="UniProtKB-UniRule"/>
</dbReference>
<dbReference type="FunFam" id="3.30.1440.10:FF:000001">
    <property type="entry name" value="50S ribosomal protein L5"/>
    <property type="match status" value="1"/>
</dbReference>
<dbReference type="Gene3D" id="3.30.1440.10">
    <property type="match status" value="1"/>
</dbReference>
<dbReference type="HAMAP" id="MF_01333_B">
    <property type="entry name" value="Ribosomal_uL5_B"/>
    <property type="match status" value="1"/>
</dbReference>
<dbReference type="InterPro" id="IPR002132">
    <property type="entry name" value="Ribosomal_uL5"/>
</dbReference>
<dbReference type="InterPro" id="IPR020930">
    <property type="entry name" value="Ribosomal_uL5_bac-type"/>
</dbReference>
<dbReference type="InterPro" id="IPR031309">
    <property type="entry name" value="Ribosomal_uL5_C"/>
</dbReference>
<dbReference type="InterPro" id="IPR020929">
    <property type="entry name" value="Ribosomal_uL5_CS"/>
</dbReference>
<dbReference type="InterPro" id="IPR022803">
    <property type="entry name" value="Ribosomal_uL5_dom_sf"/>
</dbReference>
<dbReference type="InterPro" id="IPR031310">
    <property type="entry name" value="Ribosomal_uL5_N"/>
</dbReference>
<dbReference type="NCBIfam" id="NF000585">
    <property type="entry name" value="PRK00010.1"/>
    <property type="match status" value="1"/>
</dbReference>
<dbReference type="PANTHER" id="PTHR11994">
    <property type="entry name" value="60S RIBOSOMAL PROTEIN L11-RELATED"/>
    <property type="match status" value="1"/>
</dbReference>
<dbReference type="Pfam" id="PF00281">
    <property type="entry name" value="Ribosomal_L5"/>
    <property type="match status" value="1"/>
</dbReference>
<dbReference type="Pfam" id="PF00673">
    <property type="entry name" value="Ribosomal_L5_C"/>
    <property type="match status" value="1"/>
</dbReference>
<dbReference type="PIRSF" id="PIRSF002161">
    <property type="entry name" value="Ribosomal_L5"/>
    <property type="match status" value="1"/>
</dbReference>
<dbReference type="SUPFAM" id="SSF55282">
    <property type="entry name" value="RL5-like"/>
    <property type="match status" value="1"/>
</dbReference>
<dbReference type="PROSITE" id="PS00358">
    <property type="entry name" value="RIBOSOMAL_L5"/>
    <property type="match status" value="1"/>
</dbReference>
<evidence type="ECO:0000255" key="1">
    <source>
        <dbReference type="HAMAP-Rule" id="MF_01333"/>
    </source>
</evidence>
<evidence type="ECO:0000305" key="2"/>
<feature type="chain" id="PRO_0000125003" description="Large ribosomal subunit protein uL5">
    <location>
        <begin position="1"/>
        <end position="180"/>
    </location>
</feature>
<keyword id="KW-1185">Reference proteome</keyword>
<keyword id="KW-0687">Ribonucleoprotein</keyword>
<keyword id="KW-0689">Ribosomal protein</keyword>
<keyword id="KW-0694">RNA-binding</keyword>
<keyword id="KW-0699">rRNA-binding</keyword>
<keyword id="KW-0820">tRNA-binding</keyword>